<keyword id="KW-0028">Amino-acid biosynthesis</keyword>
<keyword id="KW-0100">Branched-chain amino acid biosynthesis</keyword>
<keyword id="KW-0460">Magnesium</keyword>
<keyword id="KW-0479">Metal-binding</keyword>
<keyword id="KW-0521">NADP</keyword>
<keyword id="KW-0560">Oxidoreductase</keyword>
<keyword id="KW-1185">Reference proteome</keyword>
<proteinExistence type="inferred from homology"/>
<gene>
    <name evidence="1" type="primary">ilvC</name>
    <name type="ordered locus">DVU_1378</name>
</gene>
<evidence type="ECO:0000255" key="1">
    <source>
        <dbReference type="HAMAP-Rule" id="MF_00435"/>
    </source>
</evidence>
<evidence type="ECO:0000255" key="2">
    <source>
        <dbReference type="PROSITE-ProRule" id="PRU01197"/>
    </source>
</evidence>
<evidence type="ECO:0000255" key="3">
    <source>
        <dbReference type="PROSITE-ProRule" id="PRU01198"/>
    </source>
</evidence>
<reference key="1">
    <citation type="journal article" date="2004" name="Nat. Biotechnol.">
        <title>The genome sequence of the anaerobic, sulfate-reducing bacterium Desulfovibrio vulgaris Hildenborough.</title>
        <authorList>
            <person name="Heidelberg J.F."/>
            <person name="Seshadri R."/>
            <person name="Haveman S.A."/>
            <person name="Hemme C.L."/>
            <person name="Paulsen I.T."/>
            <person name="Kolonay J.F."/>
            <person name="Eisen J.A."/>
            <person name="Ward N.L."/>
            <person name="Methe B.A."/>
            <person name="Brinkac L.M."/>
            <person name="Daugherty S.C."/>
            <person name="DeBoy R.T."/>
            <person name="Dodson R.J."/>
            <person name="Durkin A.S."/>
            <person name="Madupu R."/>
            <person name="Nelson W.C."/>
            <person name="Sullivan S.A."/>
            <person name="Fouts D.E."/>
            <person name="Haft D.H."/>
            <person name="Selengut J."/>
            <person name="Peterson J.D."/>
            <person name="Davidsen T.M."/>
            <person name="Zafar N."/>
            <person name="Zhou L."/>
            <person name="Radune D."/>
            <person name="Dimitrov G."/>
            <person name="Hance M."/>
            <person name="Tran K."/>
            <person name="Khouri H.M."/>
            <person name="Gill J."/>
            <person name="Utterback T.R."/>
            <person name="Feldblyum T.V."/>
            <person name="Wall J.D."/>
            <person name="Voordouw G."/>
            <person name="Fraser C.M."/>
        </authorList>
    </citation>
    <scope>NUCLEOTIDE SEQUENCE [LARGE SCALE GENOMIC DNA]</scope>
    <source>
        <strain>ATCC 29579 / DSM 644 / CCUG 34227 / NCIMB 8303 / VKM B-1760 / Hildenborough</strain>
    </source>
</reference>
<name>ILVC_NITV2</name>
<sequence length="331" mass="36066">MKVYYEKDANLEALKGKTVAIIGYGSQGHAHAQNLRDSGISVIVGQRPGGANYALAKEHGFEPVSAAEAAAKADLIMILLPDQVQAAVYEAEIKPNLKAGDALLFAHGFNIHFGQIEPPKDVDVFMIAPKGPGHLVRRTYTEGGGVPCLVAVHQDATGKAMEKALAYAKGVGGSRSGVIETTFREETETDLFGEQAVLCGGLSSLIKAGFETLVEAGYQPEIAYFECLHEVKLIVDLIYEGGLERMRYSISDTAEYGDYVTGKRIVTEETKKEMKKVLRDIQDGTFARNFILEAKAGYPGFKATRRLEAEHQIEKVGGELRGMMPWLKKKV</sequence>
<protein>
    <recommendedName>
        <fullName evidence="1">Ketol-acid reductoisomerase (NADP(+))</fullName>
        <shortName evidence="1">KARI</shortName>
        <ecNumber evidence="1">1.1.1.86</ecNumber>
    </recommendedName>
    <alternativeName>
        <fullName evidence="1">Acetohydroxy-acid isomeroreductase</fullName>
        <shortName evidence="1">AHIR</shortName>
    </alternativeName>
    <alternativeName>
        <fullName evidence="1">Alpha-keto-beta-hydroxylacyl reductoisomerase</fullName>
    </alternativeName>
    <alternativeName>
        <fullName evidence="1">Ketol-acid reductoisomerase type 1</fullName>
    </alternativeName>
    <alternativeName>
        <fullName evidence="1">Ketol-acid reductoisomerase type I</fullName>
    </alternativeName>
</protein>
<dbReference type="EC" id="1.1.1.86" evidence="1"/>
<dbReference type="EMBL" id="AE017285">
    <property type="protein sequence ID" value="AAS95856.1"/>
    <property type="molecule type" value="Genomic_DNA"/>
</dbReference>
<dbReference type="RefSeq" id="WP_010938673.1">
    <property type="nucleotide sequence ID" value="NC_002937.3"/>
</dbReference>
<dbReference type="RefSeq" id="YP_010597.1">
    <property type="nucleotide sequence ID" value="NC_002937.3"/>
</dbReference>
<dbReference type="SMR" id="Q72CA6"/>
<dbReference type="IntAct" id="Q72CA6">
    <property type="interactions" value="2"/>
</dbReference>
<dbReference type="STRING" id="882.DVU_1378"/>
<dbReference type="PaxDb" id="882-DVU_1378"/>
<dbReference type="EnsemblBacteria" id="AAS95856">
    <property type="protein sequence ID" value="AAS95856"/>
    <property type="gene ID" value="DVU_1378"/>
</dbReference>
<dbReference type="KEGG" id="dvu:DVU_1378"/>
<dbReference type="PATRIC" id="fig|882.5.peg.1289"/>
<dbReference type="eggNOG" id="COG0059">
    <property type="taxonomic scope" value="Bacteria"/>
</dbReference>
<dbReference type="HOGENOM" id="CLU_033821_0_1_7"/>
<dbReference type="OrthoDB" id="9804088at2"/>
<dbReference type="PhylomeDB" id="Q72CA6"/>
<dbReference type="UniPathway" id="UPA00047">
    <property type="reaction ID" value="UER00056"/>
</dbReference>
<dbReference type="UniPathway" id="UPA00049">
    <property type="reaction ID" value="UER00060"/>
</dbReference>
<dbReference type="Proteomes" id="UP000002194">
    <property type="component" value="Chromosome"/>
</dbReference>
<dbReference type="GO" id="GO:0005829">
    <property type="term" value="C:cytosol"/>
    <property type="evidence" value="ECO:0007669"/>
    <property type="project" value="TreeGrafter"/>
</dbReference>
<dbReference type="GO" id="GO:0004455">
    <property type="term" value="F:ketol-acid reductoisomerase activity"/>
    <property type="evidence" value="ECO:0007669"/>
    <property type="project" value="UniProtKB-UniRule"/>
</dbReference>
<dbReference type="GO" id="GO:0000287">
    <property type="term" value="F:magnesium ion binding"/>
    <property type="evidence" value="ECO:0007669"/>
    <property type="project" value="UniProtKB-UniRule"/>
</dbReference>
<dbReference type="GO" id="GO:0050661">
    <property type="term" value="F:NADP binding"/>
    <property type="evidence" value="ECO:0007669"/>
    <property type="project" value="InterPro"/>
</dbReference>
<dbReference type="GO" id="GO:0009097">
    <property type="term" value="P:isoleucine biosynthetic process"/>
    <property type="evidence" value="ECO:0007669"/>
    <property type="project" value="UniProtKB-UniRule"/>
</dbReference>
<dbReference type="GO" id="GO:0009099">
    <property type="term" value="P:L-valine biosynthetic process"/>
    <property type="evidence" value="ECO:0007669"/>
    <property type="project" value="UniProtKB-UniRule"/>
</dbReference>
<dbReference type="FunFam" id="3.40.50.720:FF:000023">
    <property type="entry name" value="Ketol-acid reductoisomerase (NADP(+))"/>
    <property type="match status" value="1"/>
</dbReference>
<dbReference type="Gene3D" id="6.10.240.10">
    <property type="match status" value="1"/>
</dbReference>
<dbReference type="Gene3D" id="3.40.50.720">
    <property type="entry name" value="NAD(P)-binding Rossmann-like Domain"/>
    <property type="match status" value="1"/>
</dbReference>
<dbReference type="HAMAP" id="MF_00435">
    <property type="entry name" value="IlvC"/>
    <property type="match status" value="1"/>
</dbReference>
<dbReference type="InterPro" id="IPR008927">
    <property type="entry name" value="6-PGluconate_DH-like_C_sf"/>
</dbReference>
<dbReference type="InterPro" id="IPR013023">
    <property type="entry name" value="KARI"/>
</dbReference>
<dbReference type="InterPro" id="IPR000506">
    <property type="entry name" value="KARI_C"/>
</dbReference>
<dbReference type="InterPro" id="IPR013116">
    <property type="entry name" value="KARI_N"/>
</dbReference>
<dbReference type="InterPro" id="IPR014359">
    <property type="entry name" value="KARI_prok"/>
</dbReference>
<dbReference type="InterPro" id="IPR036291">
    <property type="entry name" value="NAD(P)-bd_dom_sf"/>
</dbReference>
<dbReference type="NCBIfam" id="TIGR00465">
    <property type="entry name" value="ilvC"/>
    <property type="match status" value="1"/>
</dbReference>
<dbReference type="NCBIfam" id="NF004017">
    <property type="entry name" value="PRK05479.1"/>
    <property type="match status" value="1"/>
</dbReference>
<dbReference type="NCBIfam" id="NF009940">
    <property type="entry name" value="PRK13403.1"/>
    <property type="match status" value="1"/>
</dbReference>
<dbReference type="PANTHER" id="PTHR21371">
    <property type="entry name" value="KETOL-ACID REDUCTOISOMERASE, MITOCHONDRIAL"/>
    <property type="match status" value="1"/>
</dbReference>
<dbReference type="PANTHER" id="PTHR21371:SF1">
    <property type="entry name" value="KETOL-ACID REDUCTOISOMERASE, MITOCHONDRIAL"/>
    <property type="match status" value="1"/>
</dbReference>
<dbReference type="Pfam" id="PF01450">
    <property type="entry name" value="KARI_C"/>
    <property type="match status" value="1"/>
</dbReference>
<dbReference type="Pfam" id="PF07991">
    <property type="entry name" value="KARI_N"/>
    <property type="match status" value="1"/>
</dbReference>
<dbReference type="PIRSF" id="PIRSF000116">
    <property type="entry name" value="IlvC_gammaproteo"/>
    <property type="match status" value="1"/>
</dbReference>
<dbReference type="SUPFAM" id="SSF48179">
    <property type="entry name" value="6-phosphogluconate dehydrogenase C-terminal domain-like"/>
    <property type="match status" value="1"/>
</dbReference>
<dbReference type="SUPFAM" id="SSF51735">
    <property type="entry name" value="NAD(P)-binding Rossmann-fold domains"/>
    <property type="match status" value="1"/>
</dbReference>
<dbReference type="PROSITE" id="PS51851">
    <property type="entry name" value="KARI_C"/>
    <property type="match status" value="1"/>
</dbReference>
<dbReference type="PROSITE" id="PS51850">
    <property type="entry name" value="KARI_N"/>
    <property type="match status" value="1"/>
</dbReference>
<feature type="chain" id="PRO_0000151308" description="Ketol-acid reductoisomerase (NADP(+))">
    <location>
        <begin position="1"/>
        <end position="331"/>
    </location>
</feature>
<feature type="domain" description="KARI N-terminal Rossmann" evidence="2">
    <location>
        <begin position="1"/>
        <end position="181"/>
    </location>
</feature>
<feature type="domain" description="KARI C-terminal knotted" evidence="3">
    <location>
        <begin position="182"/>
        <end position="327"/>
    </location>
</feature>
<feature type="active site" evidence="1">
    <location>
        <position position="107"/>
    </location>
</feature>
<feature type="binding site" evidence="1">
    <location>
        <begin position="24"/>
        <end position="27"/>
    </location>
    <ligand>
        <name>NADP(+)</name>
        <dbReference type="ChEBI" id="CHEBI:58349"/>
    </ligand>
</feature>
<feature type="binding site" evidence="1">
    <location>
        <position position="47"/>
    </location>
    <ligand>
        <name>NADP(+)</name>
        <dbReference type="ChEBI" id="CHEBI:58349"/>
    </ligand>
</feature>
<feature type="binding site" evidence="1">
    <location>
        <begin position="82"/>
        <end position="85"/>
    </location>
    <ligand>
        <name>NADP(+)</name>
        <dbReference type="ChEBI" id="CHEBI:58349"/>
    </ligand>
</feature>
<feature type="binding site" evidence="1">
    <location>
        <position position="133"/>
    </location>
    <ligand>
        <name>NADP(+)</name>
        <dbReference type="ChEBI" id="CHEBI:58349"/>
    </ligand>
</feature>
<feature type="binding site" evidence="1">
    <location>
        <position position="190"/>
    </location>
    <ligand>
        <name>Mg(2+)</name>
        <dbReference type="ChEBI" id="CHEBI:18420"/>
        <label>1</label>
    </ligand>
</feature>
<feature type="binding site" evidence="1">
    <location>
        <position position="190"/>
    </location>
    <ligand>
        <name>Mg(2+)</name>
        <dbReference type="ChEBI" id="CHEBI:18420"/>
        <label>2</label>
    </ligand>
</feature>
<feature type="binding site" evidence="1">
    <location>
        <position position="194"/>
    </location>
    <ligand>
        <name>Mg(2+)</name>
        <dbReference type="ChEBI" id="CHEBI:18420"/>
        <label>1</label>
    </ligand>
</feature>
<feature type="binding site" evidence="1">
    <location>
        <position position="226"/>
    </location>
    <ligand>
        <name>Mg(2+)</name>
        <dbReference type="ChEBI" id="CHEBI:18420"/>
        <label>2</label>
    </ligand>
</feature>
<feature type="binding site" evidence="1">
    <location>
        <position position="230"/>
    </location>
    <ligand>
        <name>Mg(2+)</name>
        <dbReference type="ChEBI" id="CHEBI:18420"/>
        <label>2</label>
    </ligand>
</feature>
<feature type="binding site" evidence="1">
    <location>
        <position position="251"/>
    </location>
    <ligand>
        <name>substrate</name>
    </ligand>
</feature>
<accession>Q72CA6</accession>
<organism>
    <name type="scientific">Nitratidesulfovibrio vulgaris (strain ATCC 29579 / DSM 644 / CCUG 34227 / NCIMB 8303 / VKM B-1760 / Hildenborough)</name>
    <name type="common">Desulfovibrio vulgaris</name>
    <dbReference type="NCBI Taxonomy" id="882"/>
    <lineage>
        <taxon>Bacteria</taxon>
        <taxon>Pseudomonadati</taxon>
        <taxon>Thermodesulfobacteriota</taxon>
        <taxon>Desulfovibrionia</taxon>
        <taxon>Desulfovibrionales</taxon>
        <taxon>Desulfovibrionaceae</taxon>
        <taxon>Nitratidesulfovibrio</taxon>
    </lineage>
</organism>
<comment type="function">
    <text evidence="1">Involved in the biosynthesis of branched-chain amino acids (BCAA). Catalyzes an alkyl-migration followed by a ketol-acid reduction of (S)-2-acetolactate (S2AL) to yield (R)-2,3-dihydroxy-isovalerate. In the isomerase reaction, S2AL is rearranged via a Mg-dependent methyl migration to produce 3-hydroxy-3-methyl-2-ketobutyrate (HMKB). In the reductase reaction, this 2-ketoacid undergoes a metal-dependent reduction by NADPH to yield (R)-2,3-dihydroxy-isovalerate.</text>
</comment>
<comment type="catalytic activity">
    <reaction evidence="1">
        <text>(2R)-2,3-dihydroxy-3-methylbutanoate + NADP(+) = (2S)-2-acetolactate + NADPH + H(+)</text>
        <dbReference type="Rhea" id="RHEA:22068"/>
        <dbReference type="ChEBI" id="CHEBI:15378"/>
        <dbReference type="ChEBI" id="CHEBI:49072"/>
        <dbReference type="ChEBI" id="CHEBI:57783"/>
        <dbReference type="ChEBI" id="CHEBI:58349"/>
        <dbReference type="ChEBI" id="CHEBI:58476"/>
        <dbReference type="EC" id="1.1.1.86"/>
    </reaction>
</comment>
<comment type="catalytic activity">
    <reaction evidence="1">
        <text>(2R,3R)-2,3-dihydroxy-3-methylpentanoate + NADP(+) = (S)-2-ethyl-2-hydroxy-3-oxobutanoate + NADPH + H(+)</text>
        <dbReference type="Rhea" id="RHEA:13493"/>
        <dbReference type="ChEBI" id="CHEBI:15378"/>
        <dbReference type="ChEBI" id="CHEBI:49256"/>
        <dbReference type="ChEBI" id="CHEBI:49258"/>
        <dbReference type="ChEBI" id="CHEBI:57783"/>
        <dbReference type="ChEBI" id="CHEBI:58349"/>
        <dbReference type="EC" id="1.1.1.86"/>
    </reaction>
</comment>
<comment type="cofactor">
    <cofactor evidence="1">
        <name>Mg(2+)</name>
        <dbReference type="ChEBI" id="CHEBI:18420"/>
    </cofactor>
    <text evidence="1">Binds 2 magnesium ions per subunit.</text>
</comment>
<comment type="pathway">
    <text evidence="1">Amino-acid biosynthesis; L-isoleucine biosynthesis; L-isoleucine from 2-oxobutanoate: step 2/4.</text>
</comment>
<comment type="pathway">
    <text evidence="1">Amino-acid biosynthesis; L-valine biosynthesis; L-valine from pyruvate: step 2/4.</text>
</comment>
<comment type="similarity">
    <text evidence="1">Belongs to the ketol-acid reductoisomerase family.</text>
</comment>